<comment type="function">
    <text evidence="1">Catalyzes amidations at positions B, D, E, and G on adenosylcobyrinic A,C-diamide. NH(2) groups are provided by glutamine, and one molecule of ATP is hydrogenolyzed for each amidation.</text>
</comment>
<comment type="pathway">
    <text evidence="1">Cofactor biosynthesis; adenosylcobalamin biosynthesis.</text>
</comment>
<comment type="similarity">
    <text evidence="1">Belongs to the CobB/CobQ family. CobQ subfamily.</text>
</comment>
<keyword id="KW-0169">Cobalamin biosynthesis</keyword>
<keyword id="KW-0315">Glutamine amidotransferase</keyword>
<dbReference type="EMBL" id="CP000962">
    <property type="protein sequence ID" value="ACA55921.1"/>
    <property type="molecule type" value="Genomic_DNA"/>
</dbReference>
<dbReference type="RefSeq" id="WP_012343842.1">
    <property type="nucleotide sequence ID" value="NC_010520.1"/>
</dbReference>
<dbReference type="SMR" id="B1KY08"/>
<dbReference type="KEGG" id="cbl:CLK_0351"/>
<dbReference type="HOGENOM" id="CLU_019250_2_2_9"/>
<dbReference type="UniPathway" id="UPA00148"/>
<dbReference type="GO" id="GO:0015420">
    <property type="term" value="F:ABC-type vitamin B12 transporter activity"/>
    <property type="evidence" value="ECO:0007669"/>
    <property type="project" value="UniProtKB-UniRule"/>
</dbReference>
<dbReference type="GO" id="GO:0003824">
    <property type="term" value="F:catalytic activity"/>
    <property type="evidence" value="ECO:0007669"/>
    <property type="project" value="InterPro"/>
</dbReference>
<dbReference type="GO" id="GO:0009236">
    <property type="term" value="P:cobalamin biosynthetic process"/>
    <property type="evidence" value="ECO:0007669"/>
    <property type="project" value="UniProtKB-UniRule"/>
</dbReference>
<dbReference type="CDD" id="cd05389">
    <property type="entry name" value="CobQ_N"/>
    <property type="match status" value="1"/>
</dbReference>
<dbReference type="CDD" id="cd01750">
    <property type="entry name" value="GATase1_CobQ"/>
    <property type="match status" value="1"/>
</dbReference>
<dbReference type="Gene3D" id="3.40.50.880">
    <property type="match status" value="1"/>
</dbReference>
<dbReference type="Gene3D" id="3.40.50.300">
    <property type="entry name" value="P-loop containing nucleotide triphosphate hydrolases"/>
    <property type="match status" value="1"/>
</dbReference>
<dbReference type="HAMAP" id="MF_00028">
    <property type="entry name" value="CobQ"/>
    <property type="match status" value="1"/>
</dbReference>
<dbReference type="InterPro" id="IPR029062">
    <property type="entry name" value="Class_I_gatase-like"/>
</dbReference>
<dbReference type="InterPro" id="IPR002586">
    <property type="entry name" value="CobQ/CobB/MinD/ParA_Nub-bd_dom"/>
</dbReference>
<dbReference type="InterPro" id="IPR033949">
    <property type="entry name" value="CobQ_GATase1"/>
</dbReference>
<dbReference type="InterPro" id="IPR047045">
    <property type="entry name" value="CobQ_N"/>
</dbReference>
<dbReference type="InterPro" id="IPR004459">
    <property type="entry name" value="CobQ_synth"/>
</dbReference>
<dbReference type="InterPro" id="IPR011698">
    <property type="entry name" value="GATase_3"/>
</dbReference>
<dbReference type="InterPro" id="IPR027417">
    <property type="entry name" value="P-loop_NTPase"/>
</dbReference>
<dbReference type="NCBIfam" id="TIGR00313">
    <property type="entry name" value="cobQ"/>
    <property type="match status" value="1"/>
</dbReference>
<dbReference type="NCBIfam" id="NF001989">
    <property type="entry name" value="PRK00784.1"/>
    <property type="match status" value="1"/>
</dbReference>
<dbReference type="PANTHER" id="PTHR21343:SF1">
    <property type="entry name" value="COBYRIC ACID SYNTHASE"/>
    <property type="match status" value="1"/>
</dbReference>
<dbReference type="PANTHER" id="PTHR21343">
    <property type="entry name" value="DETHIOBIOTIN SYNTHETASE"/>
    <property type="match status" value="1"/>
</dbReference>
<dbReference type="Pfam" id="PF01656">
    <property type="entry name" value="CbiA"/>
    <property type="match status" value="1"/>
</dbReference>
<dbReference type="Pfam" id="PF07685">
    <property type="entry name" value="GATase_3"/>
    <property type="match status" value="1"/>
</dbReference>
<dbReference type="SUPFAM" id="SSF52317">
    <property type="entry name" value="Class I glutamine amidotransferase-like"/>
    <property type="match status" value="1"/>
</dbReference>
<dbReference type="SUPFAM" id="SSF52540">
    <property type="entry name" value="P-loop containing nucleoside triphosphate hydrolases"/>
    <property type="match status" value="1"/>
</dbReference>
<dbReference type="PROSITE" id="PS51274">
    <property type="entry name" value="GATASE_COBBQ"/>
    <property type="match status" value="1"/>
</dbReference>
<feature type="chain" id="PRO_1000090226" description="Cobyric acid synthase">
    <location>
        <begin position="1"/>
        <end position="493"/>
    </location>
</feature>
<feature type="domain" description="GATase cobBQ-type" evidence="1">
    <location>
        <begin position="246"/>
        <end position="440"/>
    </location>
</feature>
<feature type="active site" description="Nucleophile" evidence="1">
    <location>
        <position position="326"/>
    </location>
</feature>
<feature type="active site" evidence="1">
    <location>
        <position position="432"/>
    </location>
</feature>
<name>COBQ_CLOBM</name>
<organism>
    <name type="scientific">Clostridium botulinum (strain Loch Maree / Type A3)</name>
    <dbReference type="NCBI Taxonomy" id="498214"/>
    <lineage>
        <taxon>Bacteria</taxon>
        <taxon>Bacillati</taxon>
        <taxon>Bacillota</taxon>
        <taxon>Clostridia</taxon>
        <taxon>Eubacteriales</taxon>
        <taxon>Clostridiaceae</taxon>
        <taxon>Clostridium</taxon>
    </lineage>
</organism>
<evidence type="ECO:0000255" key="1">
    <source>
        <dbReference type="HAMAP-Rule" id="MF_00028"/>
    </source>
</evidence>
<accession>B1KY08</accession>
<protein>
    <recommendedName>
        <fullName evidence="1">Cobyric acid synthase</fullName>
    </recommendedName>
</protein>
<sequence>MAKIMIQGTASSVGKSLIVAALCRIFKQDGYSVCPFKSQNMSLNSYITLDGKEMGRAQVLQAYAAGLEPEVYMNPILLKPTSDKKSQIIVNGKVYGNSTAMEYHNLKIKFKDMLKEQFKKLEENFDIVVMEGAGSPAEINLRDRDIVNMGMAELVDAPVLLVGDIDKGGVFASLAGTMLLLNEGEKERVKGTIINKFRGDVEILKPGLDMLEDIIHIPCLGVVPYTRLQLEDEDGAVEFNKKTYAPIDIAVIKMPHISNFTDLDALKSEEDVSIRFVTSKEELKKPDLLIIPGSKNTIEDLLYLRQCGLEESIKEYSNDGRIIGICGGYQVLGSKIKDPHNVETDLGEIDGLNLLDMKTIFEKEKVTTRVSAKLLNEEAENTVYGYEIHMGISKYGQNINPLFKIYDKNGEKVGYFDGAINDKGNVMGTYIHGVFDGVAFREKIINELRVKKGLKKKKSQVYEHMREKELDKLADIVRQSLDMKKIYSIIGMK</sequence>
<gene>
    <name evidence="1" type="primary">cobQ</name>
    <name type="ordered locus">CLK_0351</name>
</gene>
<reference key="1">
    <citation type="journal article" date="2007" name="PLoS ONE">
        <title>Analysis of the neurotoxin complex genes in Clostridium botulinum A1-A4 and B1 strains: BoNT/A3, /Ba4 and /B1 clusters are located within plasmids.</title>
        <authorList>
            <person name="Smith T.J."/>
            <person name="Hill K.K."/>
            <person name="Foley B.T."/>
            <person name="Detter J.C."/>
            <person name="Munk A.C."/>
            <person name="Bruce D.C."/>
            <person name="Doggett N.A."/>
            <person name="Smith L.A."/>
            <person name="Marks J.D."/>
            <person name="Xie G."/>
            <person name="Brettin T.S."/>
        </authorList>
    </citation>
    <scope>NUCLEOTIDE SEQUENCE [LARGE SCALE GENOMIC DNA]</scope>
    <source>
        <strain>Loch Maree / Type A3</strain>
    </source>
</reference>
<proteinExistence type="inferred from homology"/>